<comment type="function">
    <text evidence="2">Catalyzes the NADH-dependent reduction of a broad spectrum of quinone substrates, generating the corresponding hydroquinones. Highly prefers NADH to NADPH as a reducing substrate. Also displays a small NADH oxidase activity. Does not exhibit nitronate monooxygenase activity; is inactive against propionate 3-nitronate, 3-nitropropionate, nitroethane, 1-nitropropane, 2-nitropropane, and the anionic forms ethylnitronate, propyl-1-nitronate, and propyl-2-nitronate. Has no azoreductase activity since it is not able to reduce the azo dye methyl red with NADH. May be required to maintain an appropriate [NAD(+)]/[NADH] ratio for the catabolism of fatty acids in P.aeruginosa PAO1.</text>
</comment>
<comment type="catalytic activity">
    <reaction evidence="2">
        <text>a quinone + NADH + H(+) = a quinol + NAD(+)</text>
        <dbReference type="Rhea" id="RHEA:46160"/>
        <dbReference type="ChEBI" id="CHEBI:15378"/>
        <dbReference type="ChEBI" id="CHEBI:24646"/>
        <dbReference type="ChEBI" id="CHEBI:57540"/>
        <dbReference type="ChEBI" id="CHEBI:57945"/>
        <dbReference type="ChEBI" id="CHEBI:132124"/>
        <dbReference type="EC" id="1.6.5.9"/>
    </reaction>
</comment>
<comment type="cofactor">
    <cofactor evidence="1 2">
        <name>FMN</name>
        <dbReference type="ChEBI" id="CHEBI:58210"/>
    </cofactor>
    <text evidence="1 2">Binds 1 FMN per subunit.</text>
</comment>
<comment type="biophysicochemical properties">
    <kinetics>
        <KM evidence="2">10 uM for 5,8-dihydroxy-1,4-naphthoquinone</KM>
        <KM evidence="2">14 uM for 5-hydroxy-1,4-naphthoquinone</KM>
        <KM evidence="2">18 uM for 2-methyl-5-hydroxy-1,4-naphthoquinone</KM>
        <KM evidence="2">60 uM for 2-methyl-1,4-naphthoquinone</KM>
        <KM evidence="2">185 uM for 2-methoxy-1,4-naphthoquinone</KM>
        <KM evidence="2">15 uM for 1,4-benzoquinone</KM>
        <KM evidence="2">70 uM for 2-methyl-5,6-dimethoxy-1,4-benzoquinone</KM>
        <KM evidence="2">355 uM for 2,3,4,6-tetramethyl-1,4-benzoquinone</KM>
        <text evidence="2">kcat is 14 sec(-1) with 5,8-dihydroxy-1,4-naphthoquinone as substrate. kcat is 17 sec(-1) with 5-hydroxy-1,4-naphthoquinone as substrate. kcat is 16 sec(-1) with 2-methyl-5-hydroxy-1,4-naphthoquinone as substrate. kcat is 16 sec(-1) with 2-methyl-1,4-naphthoquinone as substrate. kcat is 6 sec(-1) with 2-methoxy-1,4-naphthoquinone as substrate. kcat is 27 sec(-1) with 1,4-benzoquinone as substrate. kcat is 24 sec(-1) with 2-methyl-5,6-dimethoxy-1,4-benzoquinone as substrate. kcat is 28 sec(-1) with 2,3,4,6-tetramethyl-1,4-benzoquinone as substrate.</text>
    </kinetics>
</comment>
<comment type="subunit">
    <text evidence="1">Monomer.</text>
</comment>
<comment type="miscellaneous">
    <text evidence="2">The two-electron reduction of quinones by this enzyme occurs through a Ping-Pong-Bi-Bi steady-state kinetic mechanism.</text>
</comment>
<comment type="similarity">
    <text evidence="4">Belongs to the nitronate monooxygenase family.</text>
</comment>
<comment type="caution">
    <text evidence="1 2">Was reported to be a 2-nitropropane dioxygenase, the previous name for nitronate monooxygenase (PubMed:16682407). However, later experiments demonstrate that this protein does not have any nitronate monooxygenase activity, the activity reported by Ha et al. was likely due to the non-enzymatic reaction of propyl-2-nitronate with oxygen (PubMed:27502282).</text>
</comment>
<gene>
    <name type="ordered locus">PA1024</name>
</gene>
<dbReference type="EC" id="1.6.5.9" evidence="2"/>
<dbReference type="EMBL" id="AE004091">
    <property type="protein sequence ID" value="AAG04413.1"/>
    <property type="molecule type" value="Genomic_DNA"/>
</dbReference>
<dbReference type="PIR" id="A83519">
    <property type="entry name" value="A83519"/>
</dbReference>
<dbReference type="RefSeq" id="NP_249715.1">
    <property type="nucleotide sequence ID" value="NC_002516.2"/>
</dbReference>
<dbReference type="RefSeq" id="WP_003086306.1">
    <property type="nucleotide sequence ID" value="NZ_QZGE01000006.1"/>
</dbReference>
<dbReference type="PDB" id="2GJL">
    <property type="method" value="X-ray"/>
    <property type="resolution" value="2.00 A"/>
    <property type="chains" value="A=1-328"/>
</dbReference>
<dbReference type="PDB" id="2GJN">
    <property type="method" value="X-ray"/>
    <property type="resolution" value="2.30 A"/>
    <property type="chains" value="A=1-328"/>
</dbReference>
<dbReference type="PDB" id="6E2A">
    <property type="method" value="X-ray"/>
    <property type="resolution" value="2.20 A"/>
    <property type="chains" value="A=1-328"/>
</dbReference>
<dbReference type="PDBsum" id="2GJL"/>
<dbReference type="PDBsum" id="2GJN"/>
<dbReference type="PDBsum" id="6E2A"/>
<dbReference type="SMR" id="Q9I4V0"/>
<dbReference type="STRING" id="208964.PA1024"/>
<dbReference type="PaxDb" id="208964-PA1024"/>
<dbReference type="GeneID" id="882956"/>
<dbReference type="KEGG" id="pae:PA1024"/>
<dbReference type="PATRIC" id="fig|208964.12.peg.1058"/>
<dbReference type="PseudoCAP" id="PA1024"/>
<dbReference type="HOGENOM" id="CLU_038732_1_0_6"/>
<dbReference type="InParanoid" id="Q9I4V0"/>
<dbReference type="OrthoDB" id="9778912at2"/>
<dbReference type="PhylomeDB" id="Q9I4V0"/>
<dbReference type="BioCyc" id="PAER208964:G1FZ6-1045-MONOMER"/>
<dbReference type="BRENDA" id="1.13.12.16">
    <property type="organism ID" value="5087"/>
</dbReference>
<dbReference type="EvolutionaryTrace" id="Q9I4V0"/>
<dbReference type="Proteomes" id="UP000002438">
    <property type="component" value="Chromosome"/>
</dbReference>
<dbReference type="GO" id="GO:0050136">
    <property type="term" value="F:NADH:ubiquinone reductase (non-electrogenic) activity"/>
    <property type="evidence" value="ECO:0007669"/>
    <property type="project" value="UniProtKB-EC"/>
</dbReference>
<dbReference type="GO" id="GO:0018580">
    <property type="term" value="F:nitronate monooxygenase activity"/>
    <property type="evidence" value="ECO:0007669"/>
    <property type="project" value="InterPro"/>
</dbReference>
<dbReference type="GO" id="GO:0000166">
    <property type="term" value="F:nucleotide binding"/>
    <property type="evidence" value="ECO:0007669"/>
    <property type="project" value="UniProtKB-KW"/>
</dbReference>
<dbReference type="GO" id="GO:0016491">
    <property type="term" value="F:oxidoreductase activity"/>
    <property type="evidence" value="ECO:0000314"/>
    <property type="project" value="PseudoCAP"/>
</dbReference>
<dbReference type="CDD" id="cd04730">
    <property type="entry name" value="NPD_like"/>
    <property type="match status" value="1"/>
</dbReference>
<dbReference type="FunFam" id="3.20.20.70:FF:000423">
    <property type="entry name" value="NADH:quinone reductase"/>
    <property type="match status" value="1"/>
</dbReference>
<dbReference type="Gene3D" id="3.20.20.70">
    <property type="entry name" value="Aldolase class I"/>
    <property type="match status" value="1"/>
</dbReference>
<dbReference type="InterPro" id="IPR013785">
    <property type="entry name" value="Aldolase_TIM"/>
</dbReference>
<dbReference type="InterPro" id="IPR004136">
    <property type="entry name" value="NMO"/>
</dbReference>
<dbReference type="PANTHER" id="PTHR32332">
    <property type="entry name" value="2-NITROPROPANE DIOXYGENASE"/>
    <property type="match status" value="1"/>
</dbReference>
<dbReference type="PANTHER" id="PTHR32332:SF20">
    <property type="entry name" value="2-NITROPROPANE DIOXYGENASE-LIKE PROTEIN"/>
    <property type="match status" value="1"/>
</dbReference>
<dbReference type="Pfam" id="PF03060">
    <property type="entry name" value="NMO"/>
    <property type="match status" value="1"/>
</dbReference>
<dbReference type="SUPFAM" id="SSF51412">
    <property type="entry name" value="Inosine monophosphate dehydrogenase (IMPDH)"/>
    <property type="match status" value="1"/>
</dbReference>
<evidence type="ECO:0000269" key="1">
    <source>
    </source>
</evidence>
<evidence type="ECO:0000269" key="2">
    <source>
    </source>
</evidence>
<evidence type="ECO:0000303" key="3">
    <source>
    </source>
</evidence>
<evidence type="ECO:0000305" key="4"/>
<evidence type="ECO:0007744" key="5">
    <source>
        <dbReference type="PDB" id="2GJL"/>
    </source>
</evidence>
<evidence type="ECO:0007744" key="6">
    <source>
        <dbReference type="PDB" id="2GJN"/>
    </source>
</evidence>
<evidence type="ECO:0007829" key="7">
    <source>
        <dbReference type="PDB" id="2GJL"/>
    </source>
</evidence>
<protein>
    <recommendedName>
        <fullName evidence="3">NADH:quinone reductase</fullName>
        <ecNumber evidence="2">1.6.5.9</ecNumber>
    </recommendedName>
</protein>
<accession>Q9I4V0</accession>
<name>NQRED_PSEAE</name>
<keyword id="KW-0002">3D-structure</keyword>
<keyword id="KW-0285">Flavoprotein</keyword>
<keyword id="KW-0288">FMN</keyword>
<keyword id="KW-0520">NAD</keyword>
<keyword id="KW-0547">Nucleotide-binding</keyword>
<keyword id="KW-0560">Oxidoreductase</keyword>
<keyword id="KW-1185">Reference proteome</keyword>
<organism>
    <name type="scientific">Pseudomonas aeruginosa (strain ATCC 15692 / DSM 22644 / CIP 104116 / JCM 14847 / LMG 12228 / 1C / PRS 101 / PAO1)</name>
    <dbReference type="NCBI Taxonomy" id="208964"/>
    <lineage>
        <taxon>Bacteria</taxon>
        <taxon>Pseudomonadati</taxon>
        <taxon>Pseudomonadota</taxon>
        <taxon>Gammaproteobacteria</taxon>
        <taxon>Pseudomonadales</taxon>
        <taxon>Pseudomonadaceae</taxon>
        <taxon>Pseudomonas</taxon>
    </lineage>
</organism>
<feature type="chain" id="PRO_0000392207" description="NADH:quinone reductase">
    <location>
        <begin position="1"/>
        <end position="328"/>
    </location>
</feature>
<feature type="binding site" evidence="1 5 6">
    <location>
        <begin position="22"/>
        <end position="24"/>
    </location>
    <ligand>
        <name>FMN</name>
        <dbReference type="ChEBI" id="CHEBI:58210"/>
    </ligand>
</feature>
<feature type="binding site" evidence="1 5 6">
    <location>
        <position position="75"/>
    </location>
    <ligand>
        <name>FMN</name>
        <dbReference type="ChEBI" id="CHEBI:58210"/>
    </ligand>
</feature>
<feature type="binding site" evidence="1 5 6">
    <location>
        <position position="124"/>
    </location>
    <ligand>
        <name>FMN</name>
        <dbReference type="ChEBI" id="CHEBI:58210"/>
    </ligand>
</feature>
<feature type="binding site" evidence="1 5 6">
    <location>
        <position position="150"/>
    </location>
    <ligand>
        <name>FMN</name>
        <dbReference type="ChEBI" id="CHEBI:58210"/>
    </ligand>
</feature>
<feature type="binding site" evidence="1 5 6">
    <location>
        <begin position="178"/>
        <end position="180"/>
    </location>
    <ligand>
        <name>FMN</name>
        <dbReference type="ChEBI" id="CHEBI:58210"/>
    </ligand>
</feature>
<feature type="binding site" evidence="1 5 6">
    <location>
        <begin position="201"/>
        <end position="202"/>
    </location>
    <ligand>
        <name>FMN</name>
        <dbReference type="ChEBI" id="CHEBI:58210"/>
    </ligand>
</feature>
<feature type="helix" evidence="7">
    <location>
        <begin position="7"/>
        <end position="12"/>
    </location>
</feature>
<feature type="strand" evidence="7">
    <location>
        <begin position="15"/>
        <end position="20"/>
    </location>
</feature>
<feature type="turn" evidence="7">
    <location>
        <begin position="24"/>
        <end position="26"/>
    </location>
</feature>
<feature type="helix" evidence="7">
    <location>
        <begin position="29"/>
        <end position="37"/>
    </location>
</feature>
<feature type="strand" evidence="7">
    <location>
        <begin position="43"/>
        <end position="45"/>
    </location>
</feature>
<feature type="turn" evidence="7">
    <location>
        <begin position="46"/>
        <end position="48"/>
    </location>
</feature>
<feature type="strand" evidence="7">
    <location>
        <begin position="49"/>
        <end position="51"/>
    </location>
</feature>
<feature type="helix" evidence="7">
    <location>
        <begin position="52"/>
        <end position="65"/>
    </location>
</feature>
<feature type="strand" evidence="7">
    <location>
        <begin position="71"/>
        <end position="76"/>
    </location>
</feature>
<feature type="helix" evidence="7">
    <location>
        <begin position="85"/>
        <end position="94"/>
    </location>
</feature>
<feature type="strand" evidence="7">
    <location>
        <begin position="99"/>
        <end position="105"/>
    </location>
</feature>
<feature type="helix" evidence="7">
    <location>
        <begin position="108"/>
        <end position="116"/>
    </location>
</feature>
<feature type="strand" evidence="7">
    <location>
        <begin position="120"/>
        <end position="127"/>
    </location>
</feature>
<feature type="helix" evidence="7">
    <location>
        <begin position="128"/>
        <end position="136"/>
    </location>
</feature>
<feature type="strand" evidence="7">
    <location>
        <begin position="140"/>
        <end position="145"/>
    </location>
</feature>
<feature type="helix" evidence="7">
    <location>
        <begin position="160"/>
        <end position="168"/>
    </location>
</feature>
<feature type="strand" evidence="7">
    <location>
        <begin position="175"/>
        <end position="180"/>
    </location>
</feature>
<feature type="helix" evidence="7">
    <location>
        <begin position="184"/>
        <end position="193"/>
    </location>
</feature>
<feature type="strand" evidence="7">
    <location>
        <begin position="196"/>
        <end position="201"/>
    </location>
</feature>
<feature type="helix" evidence="7">
    <location>
        <begin position="202"/>
        <end position="205"/>
    </location>
</feature>
<feature type="strand" evidence="7">
    <location>
        <begin position="207"/>
        <end position="210"/>
    </location>
</feature>
<feature type="helix" evidence="7">
    <location>
        <begin position="214"/>
        <end position="222"/>
    </location>
</feature>
<feature type="strand" evidence="7">
    <location>
        <begin position="228"/>
        <end position="231"/>
    </location>
</feature>
<feature type="helix" evidence="7">
    <location>
        <begin position="233"/>
        <end position="235"/>
    </location>
</feature>
<feature type="strand" evidence="7">
    <location>
        <begin position="239"/>
        <end position="242"/>
    </location>
</feature>
<feature type="helix" evidence="7">
    <location>
        <begin position="245"/>
        <end position="255"/>
    </location>
</feature>
<feature type="helix" evidence="7">
    <location>
        <begin position="261"/>
        <end position="263"/>
    </location>
</feature>
<feature type="helix" evidence="7">
    <location>
        <begin position="265"/>
        <end position="268"/>
    </location>
</feature>
<feature type="helix" evidence="7">
    <location>
        <begin position="270"/>
        <end position="279"/>
    </location>
</feature>
<feature type="helix" evidence="7">
    <location>
        <begin position="291"/>
        <end position="295"/>
    </location>
</feature>
<feature type="helix" evidence="7">
    <location>
        <begin position="302"/>
        <end position="318"/>
    </location>
</feature>
<feature type="helix" evidence="7">
    <location>
        <begin position="320"/>
        <end position="325"/>
    </location>
</feature>
<reference key="1">
    <citation type="journal article" date="2000" name="Nature">
        <title>Complete genome sequence of Pseudomonas aeruginosa PAO1, an opportunistic pathogen.</title>
        <authorList>
            <person name="Stover C.K."/>
            <person name="Pham X.-Q.T."/>
            <person name="Erwin A.L."/>
            <person name="Mizoguchi S.D."/>
            <person name="Warrener P."/>
            <person name="Hickey M.J."/>
            <person name="Brinkman F.S.L."/>
            <person name="Hufnagle W.O."/>
            <person name="Kowalik D.J."/>
            <person name="Lagrou M."/>
            <person name="Garber R.L."/>
            <person name="Goltry L."/>
            <person name="Tolentino E."/>
            <person name="Westbrock-Wadman S."/>
            <person name="Yuan Y."/>
            <person name="Brody L.L."/>
            <person name="Coulter S.N."/>
            <person name="Folger K.R."/>
            <person name="Kas A."/>
            <person name="Larbig K."/>
            <person name="Lim R.M."/>
            <person name="Smith K.A."/>
            <person name="Spencer D.H."/>
            <person name="Wong G.K.-S."/>
            <person name="Wu Z."/>
            <person name="Paulsen I.T."/>
            <person name="Reizer J."/>
            <person name="Saier M.H. Jr."/>
            <person name="Hancock R.E.W."/>
            <person name="Lory S."/>
            <person name="Olson M.V."/>
        </authorList>
    </citation>
    <scope>NUCLEOTIDE SEQUENCE [LARGE SCALE GENOMIC DNA]</scope>
    <source>
        <strain>ATCC 15692 / DSM 22644 / CIP 104116 / JCM 14847 / LMG 12228 / 1C / PRS 101 / PAO1</strain>
    </source>
</reference>
<reference key="2">
    <citation type="journal article" date="2016" name="J. Biol. Chem.">
        <title>Functional annotation of a presumed nitronate monooxygenase reveals a new class of NADH:quinone reductases.</title>
        <authorList>
            <person name="Ball J."/>
            <person name="Salvi F."/>
            <person name="Gadda G."/>
        </authorList>
    </citation>
    <scope>FUNCTION AS A NADH:QUINONE REDUCTASE</scope>
    <scope>CATALYTIC ACTIVITY</scope>
    <scope>SUBSTRATE SPECIFICITY</scope>
    <scope>COFACTOR</scope>
    <scope>BIOPHYSICOCHEMICAL PROPERTIES</scope>
    <scope>LACK OF NITRONATE MONOOXYGENASE ACTIVITY</scope>
    <scope>REACTION MECHANISM</scope>
    <source>
        <strain>ATCC 15692 / DSM 22644 / CIP 104116 / JCM 14847 / LMG 12228 / 1C / PRS 101 / PAO1</strain>
    </source>
</reference>
<reference evidence="5 6" key="3">
    <citation type="journal article" date="2006" name="J. Biol. Chem.">
        <title>Crystal structure of 2-nitropropane dioxygenase complexed with FMN and substrate. Identification of the catalytic base.</title>
        <authorList>
            <person name="Ha J.Y."/>
            <person name="Min J.Y."/>
            <person name="Lee S.K."/>
            <person name="Kim H.S."/>
            <person name="Kim do J."/>
            <person name="Kim K.H."/>
            <person name="Lee H.H."/>
            <person name="Kim H.K."/>
            <person name="Yoon H.-J."/>
            <person name="Suh S.W."/>
        </authorList>
    </citation>
    <scope>X-RAY CRYSTALLOGRAPHY (2.0 ANGSTROMS) IN COMPLEXES WITH 2-NITROPROPANE AND FMN</scope>
    <scope>COFACTOR</scope>
    <scope>SUBUNIT</scope>
    <source>
        <strain>ATCC 15692 / DSM 22644 / CIP 104116 / JCM 14847 / LMG 12228 / 1C / PRS 101 / PAO1</strain>
    </source>
</reference>
<sequence length="328" mass="34819">MGVFRTRFTETFGVEHPIMQGGMQWVGRAEMAAAVANAGGLATLSALTQPSPEALAAEIARCRELTDRPFGVNLTLLPTQKPVPYAEYRAAIIEAGIRVVETAGNDPGEHIAEFRRHGVKVIHKCTAVRHALKAERLGVDAVSIDGFECAGHPGEDDIPGLVLLPAAANRLRVPIIASGGFADGRGLVAALALGADAINMGTRFLATRECPIHPAVKAAIRAADERSTDLIMRSLRNTARVARNAISQEVLAIEARGGAGYADIAALVSGQRGRQVYQQGDTDLGIWSAGMVQGLIDDEPACAELLRDIVEQARQLVRQRLEGMLAGV</sequence>
<proteinExistence type="evidence at protein level"/>